<keyword id="KW-0025">Alternative splicing</keyword>
<keyword id="KW-1003">Cell membrane</keyword>
<keyword id="KW-1015">Disulfide bond</keyword>
<keyword id="KW-0325">Glycoprotein</keyword>
<keyword id="KW-0378">Hydrolase</keyword>
<keyword id="KW-0443">Lipid metabolism</keyword>
<keyword id="KW-0458">Lysosome</keyword>
<keyword id="KW-0472">Membrane</keyword>
<keyword id="KW-1185">Reference proteome</keyword>
<keyword id="KW-0964">Secreted</keyword>
<keyword id="KW-0732">Signal</keyword>
<gene>
    <name type="primary">Acp3</name>
    <name type="synonym">Acpp</name>
</gene>
<proteinExistence type="evidence at protein level"/>
<protein>
    <recommendedName>
        <fullName>Prostatic acid phosphatase</fullName>
        <ecNumber evidence="2">3.1.3.2</ecNumber>
    </recommendedName>
    <alternativeName>
        <fullName>5'-nucleotidase</fullName>
        <shortName>5'-NT</shortName>
        <ecNumber evidence="6">3.1.3.5</ecNumber>
    </alternativeName>
    <alternativeName>
        <fullName>Acid phosphatase 3</fullName>
    </alternativeName>
    <alternativeName>
        <fullName>Ecto-5'-nucleotidase</fullName>
    </alternativeName>
    <alternativeName>
        <fullName>Fluoride-resistant acid phosphatase</fullName>
        <shortName>FRAP</shortName>
    </alternativeName>
    <alternativeName>
        <fullName>Protein tyrosine phosphatase ACP3</fullName>
        <ecNumber evidence="2">3.1.3.48</ecNumber>
    </alternativeName>
    <alternativeName>
        <fullName>Thiamine monophosphatase</fullName>
        <shortName>TMPase</shortName>
    </alternativeName>
</protein>
<reference key="1">
    <citation type="submission" date="1999-12" db="EMBL/GenBank/DDBJ databases">
        <title>Sequence and expression of mouse prostatic acid phosphatase.</title>
        <authorList>
            <person name="Crew M.D."/>
            <person name="Chatta G.S."/>
            <person name="Borg C.D."/>
        </authorList>
    </citation>
    <scope>NUCLEOTIDE SEQUENCE [MRNA] (ISOFORM 1)</scope>
</reference>
<reference key="2">
    <citation type="journal article" date="2005" name="Science">
        <title>The transcriptional landscape of the mammalian genome.</title>
        <authorList>
            <person name="Carninci P."/>
            <person name="Kasukawa T."/>
            <person name="Katayama S."/>
            <person name="Gough J."/>
            <person name="Frith M.C."/>
            <person name="Maeda N."/>
            <person name="Oyama R."/>
            <person name="Ravasi T."/>
            <person name="Lenhard B."/>
            <person name="Wells C."/>
            <person name="Kodzius R."/>
            <person name="Shimokawa K."/>
            <person name="Bajic V.B."/>
            <person name="Brenner S.E."/>
            <person name="Batalov S."/>
            <person name="Forrest A.R."/>
            <person name="Zavolan M."/>
            <person name="Davis M.J."/>
            <person name="Wilming L.G."/>
            <person name="Aidinis V."/>
            <person name="Allen J.E."/>
            <person name="Ambesi-Impiombato A."/>
            <person name="Apweiler R."/>
            <person name="Aturaliya R.N."/>
            <person name="Bailey T.L."/>
            <person name="Bansal M."/>
            <person name="Baxter L."/>
            <person name="Beisel K.W."/>
            <person name="Bersano T."/>
            <person name="Bono H."/>
            <person name="Chalk A.M."/>
            <person name="Chiu K.P."/>
            <person name="Choudhary V."/>
            <person name="Christoffels A."/>
            <person name="Clutterbuck D.R."/>
            <person name="Crowe M.L."/>
            <person name="Dalla E."/>
            <person name="Dalrymple B.P."/>
            <person name="de Bono B."/>
            <person name="Della Gatta G."/>
            <person name="di Bernardo D."/>
            <person name="Down T."/>
            <person name="Engstrom P."/>
            <person name="Fagiolini M."/>
            <person name="Faulkner G."/>
            <person name="Fletcher C.F."/>
            <person name="Fukushima T."/>
            <person name="Furuno M."/>
            <person name="Futaki S."/>
            <person name="Gariboldi M."/>
            <person name="Georgii-Hemming P."/>
            <person name="Gingeras T.R."/>
            <person name="Gojobori T."/>
            <person name="Green R.E."/>
            <person name="Gustincich S."/>
            <person name="Harbers M."/>
            <person name="Hayashi Y."/>
            <person name="Hensch T.K."/>
            <person name="Hirokawa N."/>
            <person name="Hill D."/>
            <person name="Huminiecki L."/>
            <person name="Iacono M."/>
            <person name="Ikeo K."/>
            <person name="Iwama A."/>
            <person name="Ishikawa T."/>
            <person name="Jakt M."/>
            <person name="Kanapin A."/>
            <person name="Katoh M."/>
            <person name="Kawasawa Y."/>
            <person name="Kelso J."/>
            <person name="Kitamura H."/>
            <person name="Kitano H."/>
            <person name="Kollias G."/>
            <person name="Krishnan S.P."/>
            <person name="Kruger A."/>
            <person name="Kummerfeld S.K."/>
            <person name="Kurochkin I.V."/>
            <person name="Lareau L.F."/>
            <person name="Lazarevic D."/>
            <person name="Lipovich L."/>
            <person name="Liu J."/>
            <person name="Liuni S."/>
            <person name="McWilliam S."/>
            <person name="Madan Babu M."/>
            <person name="Madera M."/>
            <person name="Marchionni L."/>
            <person name="Matsuda H."/>
            <person name="Matsuzawa S."/>
            <person name="Miki H."/>
            <person name="Mignone F."/>
            <person name="Miyake S."/>
            <person name="Morris K."/>
            <person name="Mottagui-Tabar S."/>
            <person name="Mulder N."/>
            <person name="Nakano N."/>
            <person name="Nakauchi H."/>
            <person name="Ng P."/>
            <person name="Nilsson R."/>
            <person name="Nishiguchi S."/>
            <person name="Nishikawa S."/>
            <person name="Nori F."/>
            <person name="Ohara O."/>
            <person name="Okazaki Y."/>
            <person name="Orlando V."/>
            <person name="Pang K.C."/>
            <person name="Pavan W.J."/>
            <person name="Pavesi G."/>
            <person name="Pesole G."/>
            <person name="Petrovsky N."/>
            <person name="Piazza S."/>
            <person name="Reed J."/>
            <person name="Reid J.F."/>
            <person name="Ring B.Z."/>
            <person name="Ringwald M."/>
            <person name="Rost B."/>
            <person name="Ruan Y."/>
            <person name="Salzberg S.L."/>
            <person name="Sandelin A."/>
            <person name="Schneider C."/>
            <person name="Schoenbach C."/>
            <person name="Sekiguchi K."/>
            <person name="Semple C.A."/>
            <person name="Seno S."/>
            <person name="Sessa L."/>
            <person name="Sheng Y."/>
            <person name="Shibata Y."/>
            <person name="Shimada H."/>
            <person name="Shimada K."/>
            <person name="Silva D."/>
            <person name="Sinclair B."/>
            <person name="Sperling S."/>
            <person name="Stupka E."/>
            <person name="Sugiura K."/>
            <person name="Sultana R."/>
            <person name="Takenaka Y."/>
            <person name="Taki K."/>
            <person name="Tammoja K."/>
            <person name="Tan S.L."/>
            <person name="Tang S."/>
            <person name="Taylor M.S."/>
            <person name="Tegner J."/>
            <person name="Teichmann S.A."/>
            <person name="Ueda H.R."/>
            <person name="van Nimwegen E."/>
            <person name="Verardo R."/>
            <person name="Wei C.L."/>
            <person name="Yagi K."/>
            <person name="Yamanishi H."/>
            <person name="Zabarovsky E."/>
            <person name="Zhu S."/>
            <person name="Zimmer A."/>
            <person name="Hide W."/>
            <person name="Bult C."/>
            <person name="Grimmond S.M."/>
            <person name="Teasdale R.D."/>
            <person name="Liu E.T."/>
            <person name="Brusic V."/>
            <person name="Quackenbush J."/>
            <person name="Wahlestedt C."/>
            <person name="Mattick J.S."/>
            <person name="Hume D.A."/>
            <person name="Kai C."/>
            <person name="Sasaki D."/>
            <person name="Tomaru Y."/>
            <person name="Fukuda S."/>
            <person name="Kanamori-Katayama M."/>
            <person name="Suzuki M."/>
            <person name="Aoki J."/>
            <person name="Arakawa T."/>
            <person name="Iida J."/>
            <person name="Imamura K."/>
            <person name="Itoh M."/>
            <person name="Kato T."/>
            <person name="Kawaji H."/>
            <person name="Kawagashira N."/>
            <person name="Kawashima T."/>
            <person name="Kojima M."/>
            <person name="Kondo S."/>
            <person name="Konno H."/>
            <person name="Nakano K."/>
            <person name="Ninomiya N."/>
            <person name="Nishio T."/>
            <person name="Okada M."/>
            <person name="Plessy C."/>
            <person name="Shibata K."/>
            <person name="Shiraki T."/>
            <person name="Suzuki S."/>
            <person name="Tagami M."/>
            <person name="Waki K."/>
            <person name="Watahiki A."/>
            <person name="Okamura-Oho Y."/>
            <person name="Suzuki H."/>
            <person name="Kawai J."/>
            <person name="Hayashizaki Y."/>
        </authorList>
    </citation>
    <scope>NUCLEOTIDE SEQUENCE [LARGE SCALE MRNA] (ISOFORMS 1 AND 2)</scope>
    <source>
        <strain>C57BL/6J</strain>
        <tissue>Head</tissue>
        <tissue>Skin</tissue>
    </source>
</reference>
<reference key="3">
    <citation type="journal article" date="2009" name="PLoS Biol.">
        <title>Lineage-specific biology revealed by a finished genome assembly of the mouse.</title>
        <authorList>
            <person name="Church D.M."/>
            <person name="Goodstadt L."/>
            <person name="Hillier L.W."/>
            <person name="Zody M.C."/>
            <person name="Goldstein S."/>
            <person name="She X."/>
            <person name="Bult C.J."/>
            <person name="Agarwala R."/>
            <person name="Cherry J.L."/>
            <person name="DiCuccio M."/>
            <person name="Hlavina W."/>
            <person name="Kapustin Y."/>
            <person name="Meric P."/>
            <person name="Maglott D."/>
            <person name="Birtle Z."/>
            <person name="Marques A.C."/>
            <person name="Graves T."/>
            <person name="Zhou S."/>
            <person name="Teague B."/>
            <person name="Potamousis K."/>
            <person name="Churas C."/>
            <person name="Place M."/>
            <person name="Herschleb J."/>
            <person name="Runnheim R."/>
            <person name="Forrest D."/>
            <person name="Amos-Landgraf J."/>
            <person name="Schwartz D.C."/>
            <person name="Cheng Z."/>
            <person name="Lindblad-Toh K."/>
            <person name="Eichler E.E."/>
            <person name="Ponting C.P."/>
        </authorList>
    </citation>
    <scope>NUCLEOTIDE SEQUENCE [LARGE SCALE GENOMIC DNA]</scope>
    <source>
        <strain>C57BL/6J</strain>
    </source>
</reference>
<reference key="4">
    <citation type="journal article" date="2004" name="Genome Res.">
        <title>The status, quality, and expansion of the NIH full-length cDNA project: the Mammalian Gene Collection (MGC).</title>
        <authorList>
            <consortium name="The MGC Project Team"/>
        </authorList>
    </citation>
    <scope>NUCLEOTIDE SEQUENCE [LARGE SCALE MRNA] (ISOFORM 2)</scope>
</reference>
<reference key="5">
    <citation type="journal article" date="2007" name="Cancer Res.">
        <title>Prostatic acid phosphatase is not a prostate specific target.</title>
        <authorList>
            <person name="Quintero I.B."/>
            <person name="Araujo C.L."/>
            <person name="Pulkka A.E."/>
            <person name="Wirkkala R.S."/>
            <person name="Herrala A.M."/>
            <person name="Eskelinen E.-L."/>
            <person name="Jokitalo E."/>
            <person name="Hellstroem P.A."/>
            <person name="Tuominen H.J."/>
            <person name="Hirvikoski P.P."/>
            <person name="Vihko P.T."/>
        </authorList>
    </citation>
    <scope>SUBCELLULAR LOCATION</scope>
    <scope>TISSUE SPECIFICITY</scope>
</reference>
<reference key="6">
    <citation type="journal article" date="2008" name="Neuron">
        <title>Prostatic acid phosphatase is an ectonucleotidase and suppresses pain by generating adenosine.</title>
        <authorList>
            <person name="Zylka M.J."/>
            <person name="Sowa N.A."/>
            <person name="Taylor-Blake B."/>
            <person name="Twomey M.A."/>
            <person name="Herrala A."/>
            <person name="Voikar V."/>
            <person name="Vihko P."/>
        </authorList>
    </citation>
    <scope>DISRUPTION PHENOTYPE</scope>
    <scope>CATALYTIC ACTIVITY (ISOFORM 2)</scope>
    <scope>TISSUE SPECIFICITY (ISOFORM 2)</scope>
    <scope>FUNCTION (ISOFORM 2)</scope>
</reference>
<reference key="7">
    <citation type="journal article" date="2010" name="PLoS ONE">
        <title>Prostatic acid phosphatase is expressed in peptidergic and nonpeptidergic nociceptive neurons of mice and rats.</title>
        <authorList>
            <person name="Taylor-Blake B."/>
            <person name="Zylka M.J."/>
        </authorList>
    </citation>
    <scope>TISSUE SPECIFICITY</scope>
</reference>
<sequence length="381" mass="43717">MRAVPLPLSRTASLSLGFLLLLSLCLDPGQAKELKFVTLVFRHGDRGPIETFPTDPITESSWPQGFGQLTQWGMEQHYELGSYIRKRYGRFLNDTYKHDQIYIRSTDVDRTLMSAMTNLAALFPPEGISIWNPRLLWQPIPVHTVSLSEDRLLYLPFRDCPRFEELKSETLESEEFLKRLHPYKSFLDTLSSLSGFDDQDLFGIWSKVYDPLFCESVHNFTLPSWATEDAMIKLKELSELSLLSLYGIHKQKEKSRLQGGVLVNEILKNMKLATQPQKYKKLVMYSAHDTTVSGLQMALDVYNGVLPPYASCHMMELYHDKGGHFVEMYYRNETQNEPYPLTLPGCTHSCPLEKFAELLDPVISQDWATECMATSSHQGRN</sequence>
<dbReference type="EC" id="3.1.3.2" evidence="2"/>
<dbReference type="EC" id="3.1.3.5" evidence="6"/>
<dbReference type="EC" id="3.1.3.48" evidence="2"/>
<dbReference type="EMBL" id="AF210243">
    <property type="protein sequence ID" value="AAF23171.1"/>
    <property type="molecule type" value="mRNA"/>
</dbReference>
<dbReference type="EMBL" id="AK029273">
    <property type="protein sequence ID" value="BAC26366.1"/>
    <property type="molecule type" value="mRNA"/>
</dbReference>
<dbReference type="EMBL" id="AK076383">
    <property type="protein sequence ID" value="BAC36318.1"/>
    <property type="molecule type" value="mRNA"/>
</dbReference>
<dbReference type="EMBL" id="CT030733">
    <property type="status" value="NOT_ANNOTATED_CDS"/>
    <property type="molecule type" value="Genomic_DNA"/>
</dbReference>
<dbReference type="EMBL" id="BC139826">
    <property type="protein sequence ID" value="AAI39827.1"/>
    <property type="molecule type" value="mRNA"/>
</dbReference>
<dbReference type="CCDS" id="CCDS23460.1">
    <molecule id="Q8CE08-2"/>
</dbReference>
<dbReference type="CCDS" id="CCDS40750.1">
    <molecule id="Q8CE08-1"/>
</dbReference>
<dbReference type="RefSeq" id="NP_062781.2">
    <molecule id="Q8CE08-1"/>
    <property type="nucleotide sequence ID" value="NM_019807.2"/>
</dbReference>
<dbReference type="RefSeq" id="NP_997551.1">
    <molecule id="Q8CE08-2"/>
    <property type="nucleotide sequence ID" value="NM_207668.2"/>
</dbReference>
<dbReference type="SMR" id="Q8CE08"/>
<dbReference type="BioGRID" id="207899">
    <property type="interactions" value="3"/>
</dbReference>
<dbReference type="ComplexPortal" id="CPX-121">
    <property type="entry name" value="Prostatic acid phosphatase complex"/>
</dbReference>
<dbReference type="FunCoup" id="Q8CE08">
    <property type="interactions" value="99"/>
</dbReference>
<dbReference type="IntAct" id="Q8CE08">
    <property type="interactions" value="1"/>
</dbReference>
<dbReference type="STRING" id="10090.ENSMUSP00000059889"/>
<dbReference type="GlyCosmos" id="Q8CE08">
    <property type="glycosylation" value="3 sites, No reported glycans"/>
</dbReference>
<dbReference type="GlyGen" id="Q8CE08">
    <property type="glycosylation" value="3 sites, 2 N-linked glycans (2 sites)"/>
</dbReference>
<dbReference type="PhosphoSitePlus" id="Q8CE08"/>
<dbReference type="jPOST" id="Q8CE08"/>
<dbReference type="PaxDb" id="10090-ENSMUSP00000059889"/>
<dbReference type="PeptideAtlas" id="Q8CE08"/>
<dbReference type="ProteomicsDB" id="289731">
    <molecule id="Q8CE08-1"/>
</dbReference>
<dbReference type="ProteomicsDB" id="289732">
    <molecule id="Q8CE08-2"/>
</dbReference>
<dbReference type="Antibodypedia" id="1343">
    <property type="antibodies" value="1003 antibodies from 43 providers"/>
</dbReference>
<dbReference type="DNASU" id="56318"/>
<dbReference type="Ensembl" id="ENSMUST00000062723.14">
    <molecule id="Q8CE08-2"/>
    <property type="protein sequence ID" value="ENSMUSP00000059889.7"/>
    <property type="gene ID" value="ENSMUSG00000032561.16"/>
</dbReference>
<dbReference type="Ensembl" id="ENSMUST00000112590.3">
    <molecule id="Q8CE08-1"/>
    <property type="protein sequence ID" value="ENSMUSP00000108209.3"/>
    <property type="gene ID" value="ENSMUSG00000032561.16"/>
</dbReference>
<dbReference type="GeneID" id="56318"/>
<dbReference type="KEGG" id="mmu:56318"/>
<dbReference type="UCSC" id="uc009rhl.1">
    <molecule id="Q8CE08-2"/>
    <property type="organism name" value="mouse"/>
</dbReference>
<dbReference type="UCSC" id="uc009rhm.1">
    <molecule id="Q8CE08-1"/>
    <property type="organism name" value="mouse"/>
</dbReference>
<dbReference type="AGR" id="MGI:1928480"/>
<dbReference type="CTD" id="55"/>
<dbReference type="MGI" id="MGI:1928480">
    <property type="gene designation" value="Acp3"/>
</dbReference>
<dbReference type="VEuPathDB" id="HostDB:ENSMUSG00000032561"/>
<dbReference type="eggNOG" id="KOG3720">
    <property type="taxonomic scope" value="Eukaryota"/>
</dbReference>
<dbReference type="GeneTree" id="ENSGT00940000160450"/>
<dbReference type="HOGENOM" id="CLU_030431_1_1_1"/>
<dbReference type="InParanoid" id="Q8CE08"/>
<dbReference type="OMA" id="TYDTLHC"/>
<dbReference type="OrthoDB" id="37153at9989"/>
<dbReference type="TreeFam" id="TF312893"/>
<dbReference type="Reactome" id="R-MMU-6798695">
    <property type="pathway name" value="Neutrophil degranulation"/>
</dbReference>
<dbReference type="BioGRID-ORCS" id="56318">
    <property type="hits" value="0 hits in 79 CRISPR screens"/>
</dbReference>
<dbReference type="PRO" id="PR:Q8CE08"/>
<dbReference type="Proteomes" id="UP000000589">
    <property type="component" value="Chromosome 9"/>
</dbReference>
<dbReference type="RNAct" id="Q8CE08">
    <property type="molecule type" value="protein"/>
</dbReference>
<dbReference type="Bgee" id="ENSMUSG00000032561">
    <property type="expression patterns" value="Expressed in lacrimal gland and 100 other cell types or tissues"/>
</dbReference>
<dbReference type="ExpressionAtlas" id="Q8CE08">
    <property type="expression patterns" value="baseline and differential"/>
</dbReference>
<dbReference type="GO" id="GO:0045177">
    <property type="term" value="C:apical part of cell"/>
    <property type="evidence" value="ECO:0007669"/>
    <property type="project" value="Ensembl"/>
</dbReference>
<dbReference type="GO" id="GO:0005615">
    <property type="term" value="C:extracellular space"/>
    <property type="evidence" value="ECO:0000250"/>
    <property type="project" value="CAFA"/>
</dbReference>
<dbReference type="GO" id="GO:0030175">
    <property type="term" value="C:filopodium"/>
    <property type="evidence" value="ECO:0000314"/>
    <property type="project" value="UniProtKB"/>
</dbReference>
<dbReference type="GO" id="GO:0031985">
    <property type="term" value="C:Golgi cisterna"/>
    <property type="evidence" value="ECO:0007669"/>
    <property type="project" value="Ensembl"/>
</dbReference>
<dbReference type="GO" id="GO:0005765">
    <property type="term" value="C:lysosomal membrane"/>
    <property type="evidence" value="ECO:0007669"/>
    <property type="project" value="UniProtKB-SubCell"/>
</dbReference>
<dbReference type="GO" id="GO:0016020">
    <property type="term" value="C:membrane"/>
    <property type="evidence" value="ECO:0000314"/>
    <property type="project" value="UniProtKB"/>
</dbReference>
<dbReference type="GO" id="GO:0005771">
    <property type="term" value="C:multivesicular body"/>
    <property type="evidence" value="ECO:0007669"/>
    <property type="project" value="Ensembl"/>
</dbReference>
<dbReference type="GO" id="GO:0005886">
    <property type="term" value="C:plasma membrane"/>
    <property type="evidence" value="ECO:0000314"/>
    <property type="project" value="UniProtKB"/>
</dbReference>
<dbReference type="GO" id="GO:0030141">
    <property type="term" value="C:secretory granule"/>
    <property type="evidence" value="ECO:0007669"/>
    <property type="project" value="Ensembl"/>
</dbReference>
<dbReference type="GO" id="GO:0012506">
    <property type="term" value="C:vesicle membrane"/>
    <property type="evidence" value="ECO:0000314"/>
    <property type="project" value="UniProtKB"/>
</dbReference>
<dbReference type="GO" id="GO:0008253">
    <property type="term" value="F:5'-nucleotidase activity"/>
    <property type="evidence" value="ECO:0000250"/>
    <property type="project" value="CAFA"/>
</dbReference>
<dbReference type="GO" id="GO:0003993">
    <property type="term" value="F:acid phosphatase activity"/>
    <property type="evidence" value="ECO:0000250"/>
    <property type="project" value="CAFA"/>
</dbReference>
<dbReference type="GO" id="GO:0033265">
    <property type="term" value="F:choline binding"/>
    <property type="evidence" value="ECO:0007669"/>
    <property type="project" value="Ensembl"/>
</dbReference>
<dbReference type="GO" id="GO:0052642">
    <property type="term" value="F:lysophosphatidic acid phosphatase activity"/>
    <property type="evidence" value="ECO:0000250"/>
    <property type="project" value="CAFA"/>
</dbReference>
<dbReference type="GO" id="GO:0016791">
    <property type="term" value="F:phosphatase activity"/>
    <property type="evidence" value="ECO:0000250"/>
    <property type="project" value="CAFA"/>
</dbReference>
<dbReference type="GO" id="GO:0042803">
    <property type="term" value="F:protein homodimerization activity"/>
    <property type="evidence" value="ECO:0007669"/>
    <property type="project" value="Ensembl"/>
</dbReference>
<dbReference type="GO" id="GO:0004725">
    <property type="term" value="F:protein tyrosine phosphatase activity"/>
    <property type="evidence" value="ECO:0007669"/>
    <property type="project" value="UniProtKB-EC"/>
</dbReference>
<dbReference type="GO" id="GO:0042131">
    <property type="term" value="F:thiamine phosphate phosphatase activity"/>
    <property type="evidence" value="ECO:0000315"/>
    <property type="project" value="UniProtKB"/>
</dbReference>
<dbReference type="GO" id="GO:0046085">
    <property type="term" value="P:adenosine metabolic process"/>
    <property type="evidence" value="ECO:0000314"/>
    <property type="project" value="UniProtKB"/>
</dbReference>
<dbReference type="GO" id="GO:0016311">
    <property type="term" value="P:dephosphorylation"/>
    <property type="evidence" value="ECO:0000250"/>
    <property type="project" value="CAFA"/>
</dbReference>
<dbReference type="GO" id="GO:0006629">
    <property type="term" value="P:lipid metabolic process"/>
    <property type="evidence" value="ECO:0007669"/>
    <property type="project" value="UniProtKB-KW"/>
</dbReference>
<dbReference type="GO" id="GO:0009117">
    <property type="term" value="P:nucleotide metabolic process"/>
    <property type="evidence" value="ECO:0000315"/>
    <property type="project" value="UniProtKB"/>
</dbReference>
<dbReference type="GO" id="GO:0060168">
    <property type="term" value="P:positive regulation of adenosine receptor signaling pathway"/>
    <property type="evidence" value="ECO:0000250"/>
    <property type="project" value="CAFA"/>
</dbReference>
<dbReference type="GO" id="GO:0006144">
    <property type="term" value="P:purine nucleobase metabolic process"/>
    <property type="evidence" value="ECO:0000315"/>
    <property type="project" value="UniProtKB"/>
</dbReference>
<dbReference type="GO" id="GO:0051930">
    <property type="term" value="P:regulation of sensory perception of pain"/>
    <property type="evidence" value="ECO:0000315"/>
    <property type="project" value="UniProtKB"/>
</dbReference>
<dbReference type="GO" id="GO:0006772">
    <property type="term" value="P:thiamine metabolic process"/>
    <property type="evidence" value="ECO:0000315"/>
    <property type="project" value="UniProtKB"/>
</dbReference>
<dbReference type="CDD" id="cd07061">
    <property type="entry name" value="HP_HAP_like"/>
    <property type="match status" value="1"/>
</dbReference>
<dbReference type="FunFam" id="3.40.50.1240:FF:000010">
    <property type="entry name" value="Prostatic acid phosphatase"/>
    <property type="match status" value="1"/>
</dbReference>
<dbReference type="Gene3D" id="3.40.50.1240">
    <property type="entry name" value="Phosphoglycerate mutase-like"/>
    <property type="match status" value="1"/>
</dbReference>
<dbReference type="InterPro" id="IPR033379">
    <property type="entry name" value="Acid_Pase_AS"/>
</dbReference>
<dbReference type="InterPro" id="IPR000560">
    <property type="entry name" value="His_Pase_clade-2"/>
</dbReference>
<dbReference type="InterPro" id="IPR029033">
    <property type="entry name" value="His_PPase_superfam"/>
</dbReference>
<dbReference type="InterPro" id="IPR050645">
    <property type="entry name" value="Histidine_acid_phosphatase"/>
</dbReference>
<dbReference type="PANTHER" id="PTHR11567">
    <property type="entry name" value="ACID PHOSPHATASE-RELATED"/>
    <property type="match status" value="1"/>
</dbReference>
<dbReference type="PANTHER" id="PTHR11567:SF211">
    <property type="entry name" value="PROSTATIC ACID PHOSPHATASE"/>
    <property type="match status" value="1"/>
</dbReference>
<dbReference type="Pfam" id="PF00328">
    <property type="entry name" value="His_Phos_2"/>
    <property type="match status" value="1"/>
</dbReference>
<dbReference type="SUPFAM" id="SSF53254">
    <property type="entry name" value="Phosphoglycerate mutase-like"/>
    <property type="match status" value="1"/>
</dbReference>
<dbReference type="PROSITE" id="PS00616">
    <property type="entry name" value="HIS_ACID_PHOSPHAT_1"/>
    <property type="match status" value="1"/>
</dbReference>
<dbReference type="PROSITE" id="PS00778">
    <property type="entry name" value="HIS_ACID_PHOSPHAT_2"/>
    <property type="match status" value="1"/>
</dbReference>
<feature type="signal peptide" evidence="2">
    <location>
        <begin position="1"/>
        <end position="31"/>
    </location>
</feature>
<feature type="chain" id="PRO_0000356293" description="Prostatic acid phosphatase">
    <location>
        <begin position="32"/>
        <end position="381"/>
    </location>
</feature>
<feature type="active site" description="Nucleophile" evidence="2">
    <location>
        <position position="43"/>
    </location>
</feature>
<feature type="active site" description="Proton donor" evidence="2">
    <location>
        <position position="289"/>
    </location>
</feature>
<feature type="binding site" evidence="2">
    <location>
        <position position="42"/>
    </location>
    <ligand>
        <name>substrate</name>
    </ligand>
</feature>
<feature type="binding site" evidence="2">
    <location>
        <position position="46"/>
    </location>
    <ligand>
        <name>substrate</name>
    </ligand>
</feature>
<feature type="binding site" evidence="2">
    <location>
        <position position="110"/>
    </location>
    <ligand>
        <name>substrate</name>
    </ligand>
</feature>
<feature type="binding site" evidence="2">
    <location>
        <position position="288"/>
    </location>
    <ligand>
        <name>substrate</name>
    </ligand>
</feature>
<feature type="site" description="Important for substrate specificity" evidence="1">
    <location>
        <position position="48"/>
    </location>
</feature>
<feature type="site" description="Required for dimerization" evidence="3">
    <location>
        <position position="137"/>
    </location>
</feature>
<feature type="site" description="Required for dimerization" evidence="3">
    <location>
        <position position="143"/>
    </location>
</feature>
<feature type="site" description="Required for structural stability" evidence="2">
    <location>
        <position position="205"/>
    </location>
</feature>
<feature type="glycosylation site" description="N-linked (GlcNAc...) asparagine" evidence="4">
    <location>
        <position position="93"/>
    </location>
</feature>
<feature type="glycosylation site" description="N-linked (GlcNAc...) asparagine" evidence="4">
    <location>
        <position position="219"/>
    </location>
</feature>
<feature type="glycosylation site" description="N-linked (GlcNAc...) asparagine" evidence="4">
    <location>
        <position position="332"/>
    </location>
</feature>
<feature type="disulfide bond" evidence="2">
    <location>
        <begin position="160"/>
        <end position="371"/>
    </location>
</feature>
<feature type="disulfide bond" evidence="2">
    <location>
        <begin position="214"/>
        <end position="312"/>
    </location>
</feature>
<feature type="disulfide bond" evidence="2">
    <location>
        <begin position="346"/>
        <end position="350"/>
    </location>
</feature>
<feature type="splice variant" id="VSP_036024" description="In isoform 2." evidence="8 9">
    <original>QGRN</original>
    <variation>QVLRVILATTFCLVTGILVILLLVLIRHGPCWQRDVYRNI</variation>
    <location>
        <begin position="378"/>
        <end position="381"/>
    </location>
</feature>
<feature type="sequence conflict" description="In Ref. 4; AAI39827." evidence="10" ref="4">
    <original>R</original>
    <variation>G</variation>
    <location>
        <position position="2"/>
    </location>
</feature>
<feature type="sequence conflict" description="In Ref. 2; BAC36318." evidence="10" ref="2">
    <original>A</original>
    <variation>S</variation>
    <location>
        <position position="3"/>
    </location>
</feature>
<feature type="sequence conflict" description="In Ref. 4; AAI39827." evidence="10" ref="4">
    <original>R</original>
    <variation>P</variation>
    <location>
        <position position="10"/>
    </location>
</feature>
<feature type="sequence conflict" description="In Ref. 2; BAC36318." evidence="10" ref="2">
    <original>V</original>
    <variation>L</variation>
    <location>
        <position position="145"/>
    </location>
</feature>
<feature type="sequence conflict" description="In Ref. 2; BAC36318." evidence="10" ref="2">
    <original>A</original>
    <variation>P</variation>
    <location>
        <position position="230"/>
    </location>
</feature>
<feature type="sequence conflict" description="In Ref. 2; BAC36318." evidence="10" ref="2">
    <original>N</original>
    <variation>H</variation>
    <location>
        <position position="264"/>
    </location>
</feature>
<feature type="sequence conflict" description="In Ref. 2; BAC36318." evidence="10" ref="2">
    <original>F</original>
    <variation>L</variation>
    <location>
        <position position="355"/>
    </location>
</feature>
<feature type="sequence conflict" description="In Ref. 1; AAF23171." evidence="10" ref="1">
    <original>EL</original>
    <variation>DV</variation>
    <location>
        <begin position="357"/>
        <end position="358"/>
    </location>
</feature>
<organism>
    <name type="scientific">Mus musculus</name>
    <name type="common">Mouse</name>
    <dbReference type="NCBI Taxonomy" id="10090"/>
    <lineage>
        <taxon>Eukaryota</taxon>
        <taxon>Metazoa</taxon>
        <taxon>Chordata</taxon>
        <taxon>Craniata</taxon>
        <taxon>Vertebrata</taxon>
        <taxon>Euteleostomi</taxon>
        <taxon>Mammalia</taxon>
        <taxon>Eutheria</taxon>
        <taxon>Euarchontoglires</taxon>
        <taxon>Glires</taxon>
        <taxon>Rodentia</taxon>
        <taxon>Myomorpha</taxon>
        <taxon>Muroidea</taxon>
        <taxon>Muridae</taxon>
        <taxon>Murinae</taxon>
        <taxon>Mus</taxon>
        <taxon>Mus</taxon>
    </lineage>
</organism>
<evidence type="ECO:0000250" key="1"/>
<evidence type="ECO:0000250" key="2">
    <source>
        <dbReference type="UniProtKB" id="P15309"/>
    </source>
</evidence>
<evidence type="ECO:0000250" key="3">
    <source>
        <dbReference type="UniProtKB" id="P20646"/>
    </source>
</evidence>
<evidence type="ECO:0000255" key="4"/>
<evidence type="ECO:0000269" key="5">
    <source>
    </source>
</evidence>
<evidence type="ECO:0000269" key="6">
    <source>
    </source>
</evidence>
<evidence type="ECO:0000269" key="7">
    <source>
    </source>
</evidence>
<evidence type="ECO:0000303" key="8">
    <source>
    </source>
</evidence>
<evidence type="ECO:0000303" key="9">
    <source>
    </source>
</evidence>
<evidence type="ECO:0000305" key="10"/>
<evidence type="ECO:0000305" key="11">
    <source>
    </source>
</evidence>
<comment type="function">
    <text evidence="2">A non-specific tyrosine phosphatase that dephosphorylates a diverse number of substrates under acidic conditions (pH 4-6) including alkyl, aryl, and acyl orthophosphate monoesters and phosphorylated proteins. Has lipid phosphatase activity and inactivates lysophosphatidic acid in seminal plasma (By similarity).</text>
</comment>
<comment type="function">
    <molecule>Isoform 2</molecule>
    <text evidence="6">In addition to its tyrosine phosphatase activity, also has ecto-5'-nucleotidase activity in dorsal root ganglion (DRG) neurons. Generates adenosine from AMP. This extracellular adenosine leads to a decrease in chronic pain by activating A1R in nociceptive neurons.</text>
</comment>
<comment type="catalytic activity">
    <reaction evidence="2">
        <text>a phosphate monoester + H2O = an alcohol + phosphate</text>
        <dbReference type="Rhea" id="RHEA:15017"/>
        <dbReference type="ChEBI" id="CHEBI:15377"/>
        <dbReference type="ChEBI" id="CHEBI:30879"/>
        <dbReference type="ChEBI" id="CHEBI:43474"/>
        <dbReference type="ChEBI" id="CHEBI:67140"/>
        <dbReference type="EC" id="3.1.3.2"/>
    </reaction>
</comment>
<comment type="catalytic activity">
    <reaction evidence="6">
        <text>a ribonucleoside 5'-phosphate + H2O = a ribonucleoside + phosphate</text>
        <dbReference type="Rhea" id="RHEA:12484"/>
        <dbReference type="ChEBI" id="CHEBI:15377"/>
        <dbReference type="ChEBI" id="CHEBI:18254"/>
        <dbReference type="ChEBI" id="CHEBI:43474"/>
        <dbReference type="ChEBI" id="CHEBI:58043"/>
        <dbReference type="EC" id="3.1.3.5"/>
    </reaction>
</comment>
<comment type="catalytic activity">
    <reaction evidence="2">
        <text>1-(9Z-octadecenoyl)-sn-glycero-3-phosphate + H2O = 1-(9Z-octadecenoyl)-sn-glycerol + phosphate</text>
        <dbReference type="Rhea" id="RHEA:39835"/>
        <dbReference type="ChEBI" id="CHEBI:15377"/>
        <dbReference type="ChEBI" id="CHEBI:43474"/>
        <dbReference type="ChEBI" id="CHEBI:74544"/>
        <dbReference type="ChEBI" id="CHEBI:75757"/>
    </reaction>
    <physiologicalReaction direction="left-to-right" evidence="2">
        <dbReference type="Rhea" id="RHEA:39836"/>
    </physiologicalReaction>
</comment>
<comment type="catalytic activity">
    <reaction evidence="2">
        <text>O-phospho-L-tyrosyl-[protein] + H2O = L-tyrosyl-[protein] + phosphate</text>
        <dbReference type="Rhea" id="RHEA:10684"/>
        <dbReference type="Rhea" id="RHEA-COMP:10136"/>
        <dbReference type="Rhea" id="RHEA-COMP:20101"/>
        <dbReference type="ChEBI" id="CHEBI:15377"/>
        <dbReference type="ChEBI" id="CHEBI:43474"/>
        <dbReference type="ChEBI" id="CHEBI:46858"/>
        <dbReference type="ChEBI" id="CHEBI:61978"/>
        <dbReference type="EC" id="3.1.3.48"/>
    </reaction>
</comment>
<comment type="subunit">
    <text evidence="3">Homodimer; dimer formation is required for phosphatase activity.</text>
</comment>
<comment type="subcellular location">
    <molecule>Isoform 1</molecule>
    <subcellularLocation>
        <location evidence="11">Secreted</location>
    </subcellularLocation>
</comment>
<comment type="subcellular location">
    <molecule>Isoform 2</molecule>
    <subcellularLocation>
        <location evidence="5">Cell membrane</location>
        <topology evidence="4">Single-pass type I membrane protein</topology>
    </subcellularLocation>
    <subcellularLocation>
        <location evidence="5">Lysosome membrane</location>
        <topology evidence="4">Single-pass type I membrane protein</topology>
    </subcellularLocation>
    <text evidence="2 5">Appears to shuttle between the cell membrane and intracellular vesicles. Colocalizes with FLOT1 at cell membrane and in intracellular vesicles (PubMed:17638863). Colocalizes with LAMP2 on the lysosome membrane (By similarity).</text>
</comment>
<comment type="alternative products">
    <event type="alternative splicing"/>
    <isoform>
        <id>Q8CE08-1</id>
        <name>1</name>
        <sequence type="displayed"/>
    </isoform>
    <isoform>
        <id>Q8CE08-2</id>
        <name>2</name>
        <name>TMPase</name>
        <name>TM-PAP</name>
        <name>cellular PAP</name>
        <name>cPAP</name>
        <sequence type="described" ref="VSP_036024"/>
    </isoform>
</comment>
<comment type="tissue specificity">
    <molecule>Isoform 1</molecule>
    <text evidence="5 6 7">Expressed in salivary gland, thymus and thyroid gland.</text>
</comment>
<comment type="tissue specificity">
    <molecule>Isoform 2</molecule>
    <text evidence="6">Widely expressed in prostate lobes, brain, kidney, liver, lung, muscle, placenta, salivary gland, spleen, thyroid and thymus. Locates to Schwann cells and fibroblasts. Expressed in peptidergic and non-peptidergic nociceptive (pain-sensing) neurons. Preferentially expressed in non-peptidergic doral root ganglia neurons.</text>
</comment>
<comment type="disruption phenotype">
    <text evidence="6">Null mice display greater thermal hyperalgesia (pain sensitivity) and mechanical allodynia. No thiamine monophosphatase (TMPase) activity detected in dorsal root ganglion (DRG) neurons.</text>
</comment>
<comment type="similarity">
    <text evidence="10">Belongs to the histidine acid phosphatase family.</text>
</comment>
<accession>Q8CE08</accession>
<accession>A4QPG2</accession>
<accession>B8JJZ5</accession>
<accession>B8JJZ6</accession>
<accession>Q8C682</accession>
<accession>Q9QXH7</accession>
<name>PPAP_MOUSE</name>